<comment type="function">
    <text evidence="1">Translocates 4-amino-4-deoxy-L-arabinose-phosphoundecaprenol (alpha-L-Ara4N-phosphoundecaprenol) from the cytoplasmic to the periplasmic side of the inner membrane.</text>
</comment>
<comment type="pathway">
    <text evidence="1">Bacterial outer membrane biogenesis; lipopolysaccharide biosynthesis.</text>
</comment>
<comment type="subunit">
    <text evidence="1">Heterodimer of ArnE and ArnF.</text>
</comment>
<comment type="subcellular location">
    <subcellularLocation>
        <location evidence="1">Cell inner membrane</location>
        <topology evidence="1">Multi-pass membrane protein</topology>
    </subcellularLocation>
</comment>
<comment type="similarity">
    <text evidence="1">Belongs to the ArnF family.</text>
</comment>
<name>ARNF_ECO27</name>
<accession>B7UFS1</accession>
<organism>
    <name type="scientific">Escherichia coli O127:H6 (strain E2348/69 / EPEC)</name>
    <dbReference type="NCBI Taxonomy" id="574521"/>
    <lineage>
        <taxon>Bacteria</taxon>
        <taxon>Pseudomonadati</taxon>
        <taxon>Pseudomonadota</taxon>
        <taxon>Gammaproteobacteria</taxon>
        <taxon>Enterobacterales</taxon>
        <taxon>Enterobacteriaceae</taxon>
        <taxon>Escherichia</taxon>
    </lineage>
</organism>
<reference key="1">
    <citation type="journal article" date="2009" name="J. Bacteriol.">
        <title>Complete genome sequence and comparative genome analysis of enteropathogenic Escherichia coli O127:H6 strain E2348/69.</title>
        <authorList>
            <person name="Iguchi A."/>
            <person name="Thomson N.R."/>
            <person name="Ogura Y."/>
            <person name="Saunders D."/>
            <person name="Ooka T."/>
            <person name="Henderson I.R."/>
            <person name="Harris D."/>
            <person name="Asadulghani M."/>
            <person name="Kurokawa K."/>
            <person name="Dean P."/>
            <person name="Kenny B."/>
            <person name="Quail M.A."/>
            <person name="Thurston S."/>
            <person name="Dougan G."/>
            <person name="Hayashi T."/>
            <person name="Parkhill J."/>
            <person name="Frankel G."/>
        </authorList>
    </citation>
    <scope>NUCLEOTIDE SEQUENCE [LARGE SCALE GENOMIC DNA]</scope>
    <source>
        <strain>E2348/69 / EPEC</strain>
    </source>
</reference>
<protein>
    <recommendedName>
        <fullName evidence="1">Probable 4-amino-4-deoxy-L-arabinose-phosphoundecaprenol flippase subunit ArnF</fullName>
        <shortName evidence="1">L-Ara4N-phosphoundecaprenol flippase subunit ArnF</shortName>
    </recommendedName>
    <alternativeName>
        <fullName evidence="1">Undecaprenyl phosphate-aminoarabinose flippase subunit ArnF</fullName>
    </alternativeName>
</protein>
<dbReference type="EMBL" id="FM180568">
    <property type="protein sequence ID" value="CAS09951.1"/>
    <property type="molecule type" value="Genomic_DNA"/>
</dbReference>
<dbReference type="RefSeq" id="WP_000523864.1">
    <property type="nucleotide sequence ID" value="NC_011601.1"/>
</dbReference>
<dbReference type="KEGG" id="ecg:E2348C_2403"/>
<dbReference type="HOGENOM" id="CLU_131462_1_0_6"/>
<dbReference type="UniPathway" id="UPA00030"/>
<dbReference type="Proteomes" id="UP000008205">
    <property type="component" value="Chromosome"/>
</dbReference>
<dbReference type="GO" id="GO:0005886">
    <property type="term" value="C:plasma membrane"/>
    <property type="evidence" value="ECO:0007669"/>
    <property type="project" value="UniProtKB-SubCell"/>
</dbReference>
<dbReference type="GO" id="GO:1901505">
    <property type="term" value="F:carbohydrate derivative transmembrane transporter activity"/>
    <property type="evidence" value="ECO:0007669"/>
    <property type="project" value="InterPro"/>
</dbReference>
<dbReference type="GO" id="GO:0009245">
    <property type="term" value="P:lipid A biosynthetic process"/>
    <property type="evidence" value="ECO:0007669"/>
    <property type="project" value="UniProtKB-UniRule"/>
</dbReference>
<dbReference type="GO" id="GO:0009103">
    <property type="term" value="P:lipopolysaccharide biosynthetic process"/>
    <property type="evidence" value="ECO:0007669"/>
    <property type="project" value="UniProtKB-UniRule"/>
</dbReference>
<dbReference type="FunFam" id="1.10.3730.20:FF:000003">
    <property type="entry name" value="Probable 4-amino-4-deoxy-L-arabinose-phosphoundecaprenol flippase subunit ArnF"/>
    <property type="match status" value="1"/>
</dbReference>
<dbReference type="Gene3D" id="1.10.3730.20">
    <property type="match status" value="1"/>
</dbReference>
<dbReference type="HAMAP" id="MF_00538">
    <property type="entry name" value="Flippase_ArnF"/>
    <property type="match status" value="1"/>
</dbReference>
<dbReference type="InterPro" id="IPR022832">
    <property type="entry name" value="Flippase_ArnF"/>
</dbReference>
<dbReference type="InterPro" id="IPR000390">
    <property type="entry name" value="Small_drug/metabolite_transptr"/>
</dbReference>
<dbReference type="NCBIfam" id="NF002816">
    <property type="entry name" value="PRK02971.1-2"/>
    <property type="match status" value="1"/>
</dbReference>
<dbReference type="PANTHER" id="PTHR30561:SF9">
    <property type="entry name" value="4-AMINO-4-DEOXY-L-ARABINOSE-PHOSPHOUNDECAPRENOL FLIPPASE SUBUNIT ARNF-RELATED"/>
    <property type="match status" value="1"/>
</dbReference>
<dbReference type="PANTHER" id="PTHR30561">
    <property type="entry name" value="SMR FAMILY PROTON-DEPENDENT DRUG EFFLUX TRANSPORTER SUGE"/>
    <property type="match status" value="1"/>
</dbReference>
<dbReference type="SUPFAM" id="SSF103481">
    <property type="entry name" value="Multidrug resistance efflux transporter EmrE"/>
    <property type="match status" value="1"/>
</dbReference>
<feature type="chain" id="PRO_0000382459" description="Probable 4-amino-4-deoxy-L-arabinose-phosphoundecaprenol flippase subunit ArnF">
    <location>
        <begin position="1"/>
        <end position="128"/>
    </location>
</feature>
<feature type="topological domain" description="Cytoplasmic" evidence="1">
    <location>
        <begin position="1"/>
        <end position="2"/>
    </location>
</feature>
<feature type="transmembrane region" description="Helical" evidence="1">
    <location>
        <begin position="3"/>
        <end position="23"/>
    </location>
</feature>
<feature type="topological domain" description="Periplasmic" evidence="1">
    <location>
        <begin position="24"/>
        <end position="35"/>
    </location>
</feature>
<feature type="transmembrane region" description="Helical" evidence="1">
    <location>
        <begin position="36"/>
        <end position="56"/>
    </location>
</feature>
<feature type="topological domain" description="Cytoplasmic" evidence="1">
    <location>
        <begin position="57"/>
        <end position="76"/>
    </location>
</feature>
<feature type="transmembrane region" description="Helical" evidence="1">
    <location>
        <begin position="77"/>
        <end position="97"/>
    </location>
</feature>
<feature type="topological domain" description="Periplasmic" evidence="1">
    <location>
        <begin position="98"/>
        <end position="100"/>
    </location>
</feature>
<feature type="transmembrane region" description="Helical" evidence="1">
    <location>
        <begin position="101"/>
        <end position="121"/>
    </location>
</feature>
<feature type="topological domain" description="Cytoplasmic" evidence="1">
    <location>
        <begin position="122"/>
        <end position="128"/>
    </location>
</feature>
<keyword id="KW-0997">Cell inner membrane</keyword>
<keyword id="KW-1003">Cell membrane</keyword>
<keyword id="KW-0441">Lipid A biosynthesis</keyword>
<keyword id="KW-0444">Lipid biosynthesis</keyword>
<keyword id="KW-0443">Lipid metabolism</keyword>
<keyword id="KW-0448">Lipopolysaccharide biosynthesis</keyword>
<keyword id="KW-0472">Membrane</keyword>
<keyword id="KW-1185">Reference proteome</keyword>
<keyword id="KW-0812">Transmembrane</keyword>
<keyword id="KW-1133">Transmembrane helix</keyword>
<keyword id="KW-0813">Transport</keyword>
<evidence type="ECO:0000255" key="1">
    <source>
        <dbReference type="HAMAP-Rule" id="MF_00538"/>
    </source>
</evidence>
<gene>
    <name evidence="1" type="primary">arnF</name>
    <name type="ordered locus">E2348C_2403</name>
</gene>
<proteinExistence type="inferred from homology"/>
<sequence length="128" mass="14057">MGLMWGLFSVIIASAAQLSLGFAASHLPPMTHLWDFIAALLAFGLDARILLLGLLGYLLSVFCWYKTLHKLALSKAYALLSMSYVLVWIASMVLPGWEGTFSLKALLGVACIMSGLMLIFLPTTKQRY</sequence>